<feature type="chain" id="PRO_0000132634" description="Small ribosomal subunit protein uS4c">
    <location>
        <begin position="1" status="less than"/>
        <end position="182" status="greater than"/>
    </location>
</feature>
<feature type="domain" description="S4 RNA-binding">
    <location>
        <begin position="82"/>
        <end position="143"/>
    </location>
</feature>
<feature type="non-terminal residue">
    <location>
        <position position="1"/>
    </location>
</feature>
<feature type="non-terminal residue">
    <location>
        <position position="182"/>
    </location>
</feature>
<evidence type="ECO:0000250" key="1"/>
<evidence type="ECO:0000305" key="2"/>
<protein>
    <recommendedName>
        <fullName evidence="2">Small ribosomal subunit protein uS4c</fullName>
    </recommendedName>
    <alternativeName>
        <fullName>30S ribosomal protein S4, chloroplastic</fullName>
    </alternativeName>
</protein>
<reference key="1">
    <citation type="journal article" date="1997" name="Plant Syst. Evol.">
        <title>Phylogenetic analysis of Iridaceae with parsimony and distance methods using the plastid gene rps4.</title>
        <authorList>
            <person name="Souza-Chies T.T."/>
            <person name="Bittar G."/>
            <person name="Nadot S."/>
            <person name="Carter L."/>
            <person name="Besin E."/>
            <person name="Lejeune B.P."/>
        </authorList>
    </citation>
    <scope>NUCLEOTIDE SEQUENCE [GENOMIC DNA]</scope>
</reference>
<sequence>RFKKIRRLGALPGLTSKRPRSGSDLKNQLRSGKRSQYRIRLEEKQKLRFHYGLTERQLLKYVHIAGKAKGSTGQVLLQLLEMRLDNILFRLGMASTIPGARQLVNHRHILVNGRIVDIPSYRCKPRDIITTKDKERSKVLIQNYIASSPHEELPNHLTIDPLQYKGLVNQIIDSKWVGLKIN</sequence>
<proteinExistence type="inferred from homology"/>
<accession>O36051</accession>
<name>RR4_NEOSP</name>
<geneLocation type="chloroplast"/>
<comment type="function">
    <text evidence="1">One of the primary rRNA binding proteins, it binds directly to 16S rRNA where it nucleates assembly of the body of the 30S subunit.</text>
</comment>
<comment type="function">
    <text evidence="1">With S5 and S12 plays an important role in translational accuracy.</text>
</comment>
<comment type="subunit">
    <text evidence="1">Part of the 30S ribosomal subunit. Contacts protein S5. The interaction surface between S4 and S5 is involved in control of translational fidelity (By similarity).</text>
</comment>
<comment type="subcellular location">
    <subcellularLocation>
        <location>Plastid</location>
        <location>Chloroplast</location>
    </subcellularLocation>
</comment>
<comment type="similarity">
    <text evidence="2">Belongs to the universal ribosomal protein uS4 family.</text>
</comment>
<keyword id="KW-0150">Chloroplast</keyword>
<keyword id="KW-0934">Plastid</keyword>
<keyword id="KW-0687">Ribonucleoprotein</keyword>
<keyword id="KW-0689">Ribosomal protein</keyword>
<keyword id="KW-0694">RNA-binding</keyword>
<keyword id="KW-0699">rRNA-binding</keyword>
<dbReference type="EMBL" id="Z68247">
    <property type="protein sequence ID" value="CAA92545.1"/>
    <property type="molecule type" value="Genomic_DNA"/>
</dbReference>
<dbReference type="SMR" id="O36051"/>
<dbReference type="GO" id="GO:0009507">
    <property type="term" value="C:chloroplast"/>
    <property type="evidence" value="ECO:0007669"/>
    <property type="project" value="UniProtKB-SubCell"/>
</dbReference>
<dbReference type="GO" id="GO:0015935">
    <property type="term" value="C:small ribosomal subunit"/>
    <property type="evidence" value="ECO:0007669"/>
    <property type="project" value="InterPro"/>
</dbReference>
<dbReference type="GO" id="GO:0019843">
    <property type="term" value="F:rRNA binding"/>
    <property type="evidence" value="ECO:0007669"/>
    <property type="project" value="UniProtKB-KW"/>
</dbReference>
<dbReference type="GO" id="GO:0003735">
    <property type="term" value="F:structural constituent of ribosome"/>
    <property type="evidence" value="ECO:0007669"/>
    <property type="project" value="InterPro"/>
</dbReference>
<dbReference type="GO" id="GO:0042274">
    <property type="term" value="P:ribosomal small subunit biogenesis"/>
    <property type="evidence" value="ECO:0007669"/>
    <property type="project" value="TreeGrafter"/>
</dbReference>
<dbReference type="GO" id="GO:0006412">
    <property type="term" value="P:translation"/>
    <property type="evidence" value="ECO:0007669"/>
    <property type="project" value="InterPro"/>
</dbReference>
<dbReference type="CDD" id="cd00165">
    <property type="entry name" value="S4"/>
    <property type="match status" value="1"/>
</dbReference>
<dbReference type="FunFam" id="1.10.1050.10:FF:000002">
    <property type="entry name" value="30S ribosomal protein S4, chloroplastic"/>
    <property type="match status" value="1"/>
</dbReference>
<dbReference type="FunFam" id="3.10.290.10:FF:000081">
    <property type="entry name" value="30S ribosomal protein S4, chloroplastic"/>
    <property type="match status" value="1"/>
</dbReference>
<dbReference type="Gene3D" id="1.10.1050.10">
    <property type="entry name" value="Ribosomal Protein S4 Delta 41, Chain A, domain 1"/>
    <property type="match status" value="1"/>
</dbReference>
<dbReference type="Gene3D" id="3.10.290.10">
    <property type="entry name" value="RNA-binding S4 domain"/>
    <property type="match status" value="1"/>
</dbReference>
<dbReference type="HAMAP" id="MF_01306_B">
    <property type="entry name" value="Ribosomal_uS4_B"/>
    <property type="match status" value="1"/>
</dbReference>
<dbReference type="InterPro" id="IPR022801">
    <property type="entry name" value="Ribosomal_uS4"/>
</dbReference>
<dbReference type="InterPro" id="IPR005709">
    <property type="entry name" value="Ribosomal_uS4_bac-type"/>
</dbReference>
<dbReference type="InterPro" id="IPR018079">
    <property type="entry name" value="Ribosomal_uS4_CS"/>
</dbReference>
<dbReference type="InterPro" id="IPR001912">
    <property type="entry name" value="Ribosomal_uS4_N"/>
</dbReference>
<dbReference type="InterPro" id="IPR002942">
    <property type="entry name" value="S4_RNA-bd"/>
</dbReference>
<dbReference type="InterPro" id="IPR036986">
    <property type="entry name" value="S4_RNA-bd_sf"/>
</dbReference>
<dbReference type="NCBIfam" id="NF003717">
    <property type="entry name" value="PRK05327.1"/>
    <property type="match status" value="1"/>
</dbReference>
<dbReference type="NCBIfam" id="TIGR01017">
    <property type="entry name" value="rpsD_bact"/>
    <property type="match status" value="1"/>
</dbReference>
<dbReference type="PANTHER" id="PTHR11831">
    <property type="entry name" value="30S 40S RIBOSOMAL PROTEIN"/>
    <property type="match status" value="1"/>
</dbReference>
<dbReference type="PANTHER" id="PTHR11831:SF4">
    <property type="entry name" value="SMALL RIBOSOMAL SUBUNIT PROTEIN US4M"/>
    <property type="match status" value="1"/>
</dbReference>
<dbReference type="Pfam" id="PF00163">
    <property type="entry name" value="Ribosomal_S4"/>
    <property type="match status" value="1"/>
</dbReference>
<dbReference type="Pfam" id="PF01479">
    <property type="entry name" value="S4"/>
    <property type="match status" value="1"/>
</dbReference>
<dbReference type="SMART" id="SM01390">
    <property type="entry name" value="Ribosomal_S4"/>
    <property type="match status" value="1"/>
</dbReference>
<dbReference type="SMART" id="SM00363">
    <property type="entry name" value="S4"/>
    <property type="match status" value="1"/>
</dbReference>
<dbReference type="SUPFAM" id="SSF55174">
    <property type="entry name" value="Alpha-L RNA-binding motif"/>
    <property type="match status" value="1"/>
</dbReference>
<dbReference type="PROSITE" id="PS00632">
    <property type="entry name" value="RIBOSOMAL_S4"/>
    <property type="match status" value="1"/>
</dbReference>
<dbReference type="PROSITE" id="PS50889">
    <property type="entry name" value="S4"/>
    <property type="match status" value="1"/>
</dbReference>
<gene>
    <name type="primary">rps4</name>
</gene>
<organism>
    <name type="scientific">Neomarica sp. (strain Lejeune 1997)</name>
    <dbReference type="NCBI Taxonomy" id="58966"/>
    <lineage>
        <taxon>Eukaryota</taxon>
        <taxon>Viridiplantae</taxon>
        <taxon>Streptophyta</taxon>
        <taxon>Embryophyta</taxon>
        <taxon>Tracheophyta</taxon>
        <taxon>Spermatophyta</taxon>
        <taxon>Magnoliopsida</taxon>
        <taxon>Liliopsida</taxon>
        <taxon>Asparagales</taxon>
        <taxon>Iridaceae</taxon>
        <taxon>Iridoideae</taxon>
        <taxon>Trimezieae</taxon>
        <taxon>Neomarica</taxon>
    </lineage>
</organism>